<dbReference type="EMBL" id="ACFL01000194">
    <property type="protein sequence ID" value="EEU06195.1"/>
    <property type="molecule type" value="Genomic_DNA"/>
</dbReference>
<dbReference type="SMR" id="C7GSL9"/>
<dbReference type="Proteomes" id="UP000008073">
    <property type="component" value="Unassembled WGS sequence"/>
</dbReference>
<dbReference type="GO" id="GO:0005737">
    <property type="term" value="C:cytoplasm"/>
    <property type="evidence" value="ECO:0007669"/>
    <property type="project" value="UniProtKB-SubCell"/>
</dbReference>
<dbReference type="GO" id="GO:0005634">
    <property type="term" value="C:nucleus"/>
    <property type="evidence" value="ECO:0007669"/>
    <property type="project" value="UniProtKB-SubCell"/>
</dbReference>
<dbReference type="GO" id="GO:1990846">
    <property type="term" value="F:ribonucleoside-diphosphate reductase inhibitor activity"/>
    <property type="evidence" value="ECO:0007669"/>
    <property type="project" value="TreeGrafter"/>
</dbReference>
<dbReference type="GO" id="GO:0008104">
    <property type="term" value="P:protein localization"/>
    <property type="evidence" value="ECO:0007669"/>
    <property type="project" value="TreeGrafter"/>
</dbReference>
<dbReference type="InterPro" id="IPR013900">
    <property type="entry name" value="RNR_inhibitor"/>
</dbReference>
<dbReference type="PANTHER" id="PTHR28081:SF1">
    <property type="entry name" value="DAMAGE-REGULATED IMPORT FACILITATOR 1"/>
    <property type="match status" value="1"/>
</dbReference>
<dbReference type="PANTHER" id="PTHR28081">
    <property type="entry name" value="DAMAGE-REGULATED IMPORT FACILITATOR 1-RELATED"/>
    <property type="match status" value="1"/>
</dbReference>
<reference key="1">
    <citation type="journal article" date="2009" name="Genome Res.">
        <title>Genome structure of a Saccharomyces cerevisiae strain widely used in bioethanol production.</title>
        <authorList>
            <person name="Argueso J.L."/>
            <person name="Carazzolle M.F."/>
            <person name="Mieczkowski P.A."/>
            <person name="Duarte F.M."/>
            <person name="Netto O.V.C."/>
            <person name="Missawa S.K."/>
            <person name="Galzerani F."/>
            <person name="Costa G.G.L."/>
            <person name="Vidal R.O."/>
            <person name="Noronha M.F."/>
            <person name="Dominska M."/>
            <person name="Andrietta M.G.S."/>
            <person name="Andrietta S.R."/>
            <person name="Cunha A.F."/>
            <person name="Gomes L.H."/>
            <person name="Tavares F.C.A."/>
            <person name="Alcarde A.R."/>
            <person name="Dietrich F.S."/>
            <person name="McCusker J.H."/>
            <person name="Petes T.D."/>
            <person name="Pereira G.A.G."/>
        </authorList>
    </citation>
    <scope>NUCLEOTIDE SEQUENCE [LARGE SCALE GENOMIC DNA]</scope>
    <source>
        <strain>JAY291</strain>
    </source>
</reference>
<accession>C7GSL9</accession>
<sequence length="132" mass="15007">MDAQLEWASSLVPKRQLQQQQQQEQQQQQQQDFHKDQLMTVGMRIRQRVDQGYASRTPSTSDASLQPGVIRDYSSVIVPQFTRSPLPTANSLPPMLINQRTMSTEASSLEKWDVAEPAAEHEAMVNGSKRRL</sequence>
<protein>
    <recommendedName>
        <fullName>Damage-regulated import facilitator 1</fullName>
    </recommendedName>
</protein>
<name>DIF1_YEAS2</name>
<feature type="chain" id="PRO_0000399015" description="Damage-regulated import facilitator 1">
    <location>
        <begin position="1"/>
        <end position="132"/>
    </location>
</feature>
<feature type="region of interest" description="Disordered" evidence="2">
    <location>
        <begin position="1"/>
        <end position="41"/>
    </location>
</feature>
<feature type="region of interest" description="Disordered" evidence="2">
    <location>
        <begin position="108"/>
        <end position="132"/>
    </location>
</feature>
<feature type="compositionally biased region" description="Low complexity" evidence="2">
    <location>
        <begin position="16"/>
        <end position="31"/>
    </location>
</feature>
<feature type="compositionally biased region" description="Basic and acidic residues" evidence="2">
    <location>
        <begin position="108"/>
        <end position="123"/>
    </location>
</feature>
<keyword id="KW-0963">Cytoplasm</keyword>
<keyword id="KW-0539">Nucleus</keyword>
<keyword id="KW-0597">Phosphoprotein</keyword>
<gene>
    <name type="primary">DIF1</name>
    <name type="ORF">C1Q_03365</name>
</gene>
<proteinExistence type="inferred from homology"/>
<evidence type="ECO:0000250" key="1"/>
<evidence type="ECO:0000256" key="2">
    <source>
        <dbReference type="SAM" id="MobiDB-lite"/>
    </source>
</evidence>
<evidence type="ECO:0000305" key="3"/>
<organism>
    <name type="scientific">Saccharomyces cerevisiae (strain JAY291)</name>
    <name type="common">Baker's yeast</name>
    <dbReference type="NCBI Taxonomy" id="574961"/>
    <lineage>
        <taxon>Eukaryota</taxon>
        <taxon>Fungi</taxon>
        <taxon>Dikarya</taxon>
        <taxon>Ascomycota</taxon>
        <taxon>Saccharomycotina</taxon>
        <taxon>Saccharomycetes</taxon>
        <taxon>Saccharomycetales</taxon>
        <taxon>Saccharomycetaceae</taxon>
        <taxon>Saccharomyces</taxon>
    </lineage>
</organism>
<comment type="function">
    <text evidence="1">Mediates the nuclear localization of RNR2 and RNR4, 2 subunits of the ribonucleotide reductase.</text>
</comment>
<comment type="subunit">
    <text evidence="1">Interacts with RNR2 and RNR4.</text>
</comment>
<comment type="subcellular location">
    <subcellularLocation>
        <location evidence="1">Cytoplasm</location>
    </subcellularLocation>
    <subcellularLocation>
        <location evidence="1">Nucleus</location>
    </subcellularLocation>
</comment>
<comment type="PTM">
    <text evidence="1">Phosphorylated by DUN1 in response to DNA damage which leads to its degradation.</text>
</comment>
<comment type="similarity">
    <text evidence="3">Belongs to the DIF1/spd1 family.</text>
</comment>